<dbReference type="EMBL" id="M30931">
    <property type="protein sequence ID" value="AAA91917.1"/>
    <property type="molecule type" value="Genomic_RNA"/>
</dbReference>
<dbReference type="PIR" id="A46356">
    <property type="entry name" value="A46356"/>
</dbReference>
<dbReference type="GO" id="GO:0044196">
    <property type="term" value="C:host cell nucleolus"/>
    <property type="evidence" value="ECO:0007669"/>
    <property type="project" value="UniProtKB-SubCell"/>
</dbReference>
<dbReference type="GO" id="GO:0003723">
    <property type="term" value="F:RNA binding"/>
    <property type="evidence" value="ECO:0007669"/>
    <property type="project" value="UniProtKB-KW"/>
</dbReference>
<dbReference type="GO" id="GO:0001070">
    <property type="term" value="F:RNA-binding transcription regulator activity"/>
    <property type="evidence" value="ECO:0007669"/>
    <property type="project" value="InterPro"/>
</dbReference>
<dbReference type="GO" id="GO:0050434">
    <property type="term" value="P:positive regulation of viral transcription"/>
    <property type="evidence" value="ECO:0007669"/>
    <property type="project" value="InterPro"/>
</dbReference>
<dbReference type="Gene3D" id="4.10.20.10">
    <property type="entry name" value="Tat domain"/>
    <property type="match status" value="1"/>
</dbReference>
<dbReference type="InterPro" id="IPR001831">
    <property type="entry name" value="IV_Tat"/>
</dbReference>
<dbReference type="InterPro" id="IPR036963">
    <property type="entry name" value="Tat_dom_sf"/>
</dbReference>
<dbReference type="Pfam" id="PF00539">
    <property type="entry name" value="Tat"/>
    <property type="match status" value="1"/>
</dbReference>
<dbReference type="PRINTS" id="PR00055">
    <property type="entry name" value="HIVTATDOMAIN"/>
</dbReference>
<sequence>MDKGEDEQGAYHQDLIEQLKAPLKRCTNKCYCKCCCYHCQLCFLQKGLGVTYHAPRIRRKKIAPLDRFPEQKQSISTRGRDSQTTQKGQEKVETSARTAPSLGRKNLAQQSGRATGASD</sequence>
<proteinExistence type="inferred from homology"/>
<organism>
    <name type="scientific">Simian immunodeficiency virus agm.vervet (isolate AGM3)</name>
    <name type="common">SIV-agm.ver</name>
    <name type="synonym">Simian immunodeficiency virus African green monkey vervet</name>
    <dbReference type="NCBI Taxonomy" id="11730"/>
    <lineage>
        <taxon>Viruses</taxon>
        <taxon>Riboviria</taxon>
        <taxon>Pararnavirae</taxon>
        <taxon>Artverviricota</taxon>
        <taxon>Revtraviricetes</taxon>
        <taxon>Ortervirales</taxon>
        <taxon>Retroviridae</taxon>
        <taxon>Orthoretrovirinae</taxon>
        <taxon>Lentivirus</taxon>
        <taxon>Simian immunodeficiency virus</taxon>
    </lineage>
</organism>
<comment type="function">
    <text evidence="2">Transcriptional activator that increases RNA Pol II processivity, thereby increasing the level of full-length viral transcripts. Recognizes a hairpin structure at the 5'-LTR of the nascent viral mRNAs referred to as the transactivation responsive RNA element (TAR) and recruits the cyclin T1-CDK9 complex (P-TEFb complex) that will in turn hyperphosphorylate the RNA polymerase II to allow efficient elongation. The CDK9 component of P-TEFb and other Tat-activated kinases hyperphosphorylate the C-terminus of RNA Pol II that becomes stabilized and much more processive.</text>
</comment>
<comment type="function">
    <text evidence="1">Extracellular circulating Tat can be endocytosed by surrounding uninfected cells via the binding to several surface receptors. Endosomal low pH allows Tat to cross the endosome membrane to enter the cytosol and eventually further translocate into the nucleus, thereby inducing severe cell dysfunctions ranging from cell activation to cell death. Through (By similarity).</text>
</comment>
<comment type="subunit">
    <text evidence="1">Interacts with host CCNT1. Associates with the P-TEFb complex composed at least of Tat, P-TEFb (CDK9 and CCNT1), TAR RNA, RNA Pol II. Interacts with CCNT2; the resulting complex is unable to bind to TAR RNA (By similarity).</text>
</comment>
<comment type="subcellular location">
    <subcellularLocation>
        <location evidence="1">Host nucleus</location>
        <location evidence="1">Host nucleolus</location>
    </subcellularLocation>
</comment>
<comment type="similarity">
    <text evidence="5">Belongs to the lentiviruses Tat family.</text>
</comment>
<name>TAT_SIVVG</name>
<protein>
    <recommendedName>
        <fullName>Protein Tat</fullName>
    </recommendedName>
    <alternativeName>
        <fullName>Transactivating regulatory protein</fullName>
    </alternativeName>
</protein>
<gene>
    <name type="primary">tat</name>
</gene>
<accession>P27982</accession>
<reference key="1">
    <citation type="journal article" date="1990" name="Virology">
        <title>Complete nucleotide sequence of a simian immunodeficiency virus from African green monkeys: a novel type of intragroup divergence.</title>
        <authorList>
            <person name="Baier M."/>
            <person name="Garber C."/>
            <person name="Mueller C."/>
            <person name="Cichutek K."/>
            <person name="Kurth R."/>
        </authorList>
    </citation>
    <scope>NUCLEOTIDE SEQUENCE [GENOMIC RNA]</scope>
</reference>
<keyword id="KW-0010">Activator</keyword>
<keyword id="KW-1048">Host nucleus</keyword>
<keyword id="KW-0945">Host-virus interaction</keyword>
<keyword id="KW-0694">RNA-binding</keyword>
<keyword id="KW-0804">Transcription</keyword>
<keyword id="KW-0805">Transcription regulation</keyword>
<evidence type="ECO:0000250" key="1"/>
<evidence type="ECO:0000250" key="2">
    <source>
        <dbReference type="UniProtKB" id="P04608"/>
    </source>
</evidence>
<evidence type="ECO:0000255" key="3"/>
<evidence type="ECO:0000256" key="4">
    <source>
        <dbReference type="SAM" id="MobiDB-lite"/>
    </source>
</evidence>
<evidence type="ECO:0000305" key="5"/>
<feature type="chain" id="PRO_0000085377" description="Protein Tat">
    <location>
        <begin position="1"/>
        <end position="119"/>
    </location>
</feature>
<feature type="region of interest" description="Cysteine-rich" evidence="1">
    <location>
        <begin position="26"/>
        <end position="42"/>
    </location>
</feature>
<feature type="region of interest" description="Core" evidence="1">
    <location>
        <begin position="43"/>
        <end position="53"/>
    </location>
</feature>
<feature type="region of interest" description="Disordered" evidence="4">
    <location>
        <begin position="61"/>
        <end position="119"/>
    </location>
</feature>
<feature type="short sequence motif" description="Nuclear localization signal, and RNA-binding (TAR)" evidence="3">
    <location>
        <begin position="54"/>
        <end position="60"/>
    </location>
</feature>
<feature type="compositionally biased region" description="Polar residues" evidence="4">
    <location>
        <begin position="71"/>
        <end position="87"/>
    </location>
</feature>
<feature type="compositionally biased region" description="Polar residues" evidence="4">
    <location>
        <begin position="107"/>
        <end position="119"/>
    </location>
</feature>
<organismHost>
    <name type="scientific">Cercopithecidae</name>
    <name type="common">Old World monkeys</name>
    <dbReference type="NCBI Taxonomy" id="9527"/>
</organismHost>